<dbReference type="EC" id="2.1.1.228"/>
<dbReference type="EMBL" id="U00089">
    <property type="protein sequence ID" value="AAB95831.1"/>
    <property type="status" value="ALT_INIT"/>
    <property type="molecule type" value="Genomic_DNA"/>
</dbReference>
<dbReference type="RefSeq" id="NP_110348.1">
    <property type="nucleotide sequence ID" value="NC_000912.1"/>
</dbReference>
<dbReference type="RefSeq" id="WP_017532956.1">
    <property type="nucleotide sequence ID" value="NZ_OU342337.1"/>
</dbReference>
<dbReference type="SMR" id="P75132"/>
<dbReference type="STRING" id="272634.MPN_659"/>
<dbReference type="EnsemblBacteria" id="AAB95831">
    <property type="protein sequence ID" value="AAB95831"/>
    <property type="gene ID" value="MPN_659"/>
</dbReference>
<dbReference type="KEGG" id="mpn:MPN_659"/>
<dbReference type="PATRIC" id="fig|272634.6.peg.724"/>
<dbReference type="HOGENOM" id="CLU_047363_0_1_14"/>
<dbReference type="OrthoDB" id="9807416at2"/>
<dbReference type="Proteomes" id="UP000000808">
    <property type="component" value="Chromosome"/>
</dbReference>
<dbReference type="GO" id="GO:0005829">
    <property type="term" value="C:cytosol"/>
    <property type="evidence" value="ECO:0007669"/>
    <property type="project" value="TreeGrafter"/>
</dbReference>
<dbReference type="GO" id="GO:0052906">
    <property type="term" value="F:tRNA (guanine(37)-N1)-methyltransferase activity"/>
    <property type="evidence" value="ECO:0007669"/>
    <property type="project" value="UniProtKB-UniRule"/>
</dbReference>
<dbReference type="GO" id="GO:0002939">
    <property type="term" value="P:tRNA N1-guanine methylation"/>
    <property type="evidence" value="ECO:0007669"/>
    <property type="project" value="TreeGrafter"/>
</dbReference>
<dbReference type="CDD" id="cd18080">
    <property type="entry name" value="TrmD-like"/>
    <property type="match status" value="1"/>
</dbReference>
<dbReference type="FunFam" id="1.10.1270.20:FF:000005">
    <property type="entry name" value="tRNA (guanine-N(1)-)-methyltransferase"/>
    <property type="match status" value="1"/>
</dbReference>
<dbReference type="FunFam" id="3.40.1280.10:FF:000001">
    <property type="entry name" value="tRNA (guanine-N(1)-)-methyltransferase"/>
    <property type="match status" value="1"/>
</dbReference>
<dbReference type="Gene3D" id="3.40.1280.10">
    <property type="match status" value="1"/>
</dbReference>
<dbReference type="Gene3D" id="1.10.1270.20">
    <property type="entry name" value="tRNA(m1g37)methyltransferase, domain 2"/>
    <property type="match status" value="1"/>
</dbReference>
<dbReference type="HAMAP" id="MF_00605">
    <property type="entry name" value="TrmD"/>
    <property type="match status" value="1"/>
</dbReference>
<dbReference type="InterPro" id="IPR029028">
    <property type="entry name" value="Alpha/beta_knot_MTases"/>
</dbReference>
<dbReference type="InterPro" id="IPR023148">
    <property type="entry name" value="tRNA_m1G_MeTrfase_C_sf"/>
</dbReference>
<dbReference type="InterPro" id="IPR002649">
    <property type="entry name" value="tRNA_m1G_MeTrfase_TrmD"/>
</dbReference>
<dbReference type="InterPro" id="IPR029026">
    <property type="entry name" value="tRNA_m1G_MTases_N"/>
</dbReference>
<dbReference type="InterPro" id="IPR016009">
    <property type="entry name" value="tRNA_MeTrfase_TRMD/TRM10"/>
</dbReference>
<dbReference type="NCBIfam" id="NF000648">
    <property type="entry name" value="PRK00026.1"/>
    <property type="match status" value="1"/>
</dbReference>
<dbReference type="NCBIfam" id="TIGR00088">
    <property type="entry name" value="trmD"/>
    <property type="match status" value="1"/>
</dbReference>
<dbReference type="PANTHER" id="PTHR46417">
    <property type="entry name" value="TRNA (GUANINE-N(1)-)-METHYLTRANSFERASE"/>
    <property type="match status" value="1"/>
</dbReference>
<dbReference type="PANTHER" id="PTHR46417:SF1">
    <property type="entry name" value="TRNA (GUANINE-N(1)-)-METHYLTRANSFERASE"/>
    <property type="match status" value="1"/>
</dbReference>
<dbReference type="Pfam" id="PF01746">
    <property type="entry name" value="tRNA_m1G_MT"/>
    <property type="match status" value="1"/>
</dbReference>
<dbReference type="PIRSF" id="PIRSF000386">
    <property type="entry name" value="tRNA_mtase"/>
    <property type="match status" value="1"/>
</dbReference>
<dbReference type="SUPFAM" id="SSF75217">
    <property type="entry name" value="alpha/beta knot"/>
    <property type="match status" value="1"/>
</dbReference>
<name>TRMD_MYCPN</name>
<feature type="chain" id="PRO_0000060417" description="tRNA (guanine-N(1)-)-methyltransferase">
    <location>
        <begin position="1"/>
        <end position="231"/>
    </location>
</feature>
<feature type="binding site" evidence="1">
    <location>
        <position position="110"/>
    </location>
    <ligand>
        <name>S-adenosyl-L-methionine</name>
        <dbReference type="ChEBI" id="CHEBI:59789"/>
    </ligand>
</feature>
<feature type="binding site" evidence="1">
    <location>
        <begin position="129"/>
        <end position="134"/>
    </location>
    <ligand>
        <name>S-adenosyl-L-methionine</name>
        <dbReference type="ChEBI" id="CHEBI:59789"/>
    </ligand>
</feature>
<comment type="function">
    <text evidence="1">Specifically methylates guanosine-37 in various tRNAs.</text>
</comment>
<comment type="catalytic activity">
    <reaction>
        <text>guanosine(37) in tRNA + S-adenosyl-L-methionine = N(1)-methylguanosine(37) in tRNA + S-adenosyl-L-homocysteine + H(+)</text>
        <dbReference type="Rhea" id="RHEA:36899"/>
        <dbReference type="Rhea" id="RHEA-COMP:10145"/>
        <dbReference type="Rhea" id="RHEA-COMP:10147"/>
        <dbReference type="ChEBI" id="CHEBI:15378"/>
        <dbReference type="ChEBI" id="CHEBI:57856"/>
        <dbReference type="ChEBI" id="CHEBI:59789"/>
        <dbReference type="ChEBI" id="CHEBI:73542"/>
        <dbReference type="ChEBI" id="CHEBI:74269"/>
        <dbReference type="EC" id="2.1.1.228"/>
    </reaction>
</comment>
<comment type="subunit">
    <text evidence="1">Homodimer.</text>
</comment>
<comment type="subcellular location">
    <subcellularLocation>
        <location evidence="2">Cytoplasm</location>
    </subcellularLocation>
</comment>
<comment type="similarity">
    <text evidence="2">Belongs to the RNA methyltransferase TrmD family.</text>
</comment>
<comment type="sequence caution" evidence="2">
    <conflict type="erroneous initiation">
        <sequence resource="EMBL-CDS" id="AAB95831"/>
    </conflict>
</comment>
<protein>
    <recommendedName>
        <fullName>tRNA (guanine-N(1)-)-methyltransferase</fullName>
        <ecNumber>2.1.1.228</ecNumber>
    </recommendedName>
    <alternativeName>
        <fullName>M1G-methyltransferase</fullName>
    </alternativeName>
    <alternativeName>
        <fullName>tRNA [GM37] methyltransferase</fullName>
    </alternativeName>
</protein>
<evidence type="ECO:0000250" key="1"/>
<evidence type="ECO:0000305" key="2"/>
<sequence>MKITVLTLFEQVVWPYLNASIMAQAQKAKLVEFEVINWRQYCKDKHQTVDDMAYGGGGGMVLKAEPILKALKACRTPQSKVVLLSPEGQQFSQPMAQALTQTEHLILICGHYEGFDYRLYKHVDQIISLGDFVLSGGELVALSVIDATVRLIKGVINDQSLIHESFNNYLLDFPAYTRPYDLDGDKVPEILLSGDHKKIEAYRKEQQLLRTAQYRPDLYKQYLAKKDEKNK</sequence>
<keyword id="KW-0963">Cytoplasm</keyword>
<keyword id="KW-0489">Methyltransferase</keyword>
<keyword id="KW-1185">Reference proteome</keyword>
<keyword id="KW-0949">S-adenosyl-L-methionine</keyword>
<keyword id="KW-0808">Transferase</keyword>
<keyword id="KW-0819">tRNA processing</keyword>
<gene>
    <name type="primary">trmD</name>
    <name type="ordered locus">MPN_659</name>
    <name type="ORF">MP183</name>
</gene>
<organism>
    <name type="scientific">Mycoplasma pneumoniae (strain ATCC 29342 / M129 / Subtype 1)</name>
    <name type="common">Mycoplasmoides pneumoniae</name>
    <dbReference type="NCBI Taxonomy" id="272634"/>
    <lineage>
        <taxon>Bacteria</taxon>
        <taxon>Bacillati</taxon>
        <taxon>Mycoplasmatota</taxon>
        <taxon>Mycoplasmoidales</taxon>
        <taxon>Mycoplasmoidaceae</taxon>
        <taxon>Mycoplasmoides</taxon>
    </lineage>
</organism>
<reference key="1">
    <citation type="journal article" date="1996" name="Nucleic Acids Res.">
        <title>Complete sequence analysis of the genome of the bacterium Mycoplasma pneumoniae.</title>
        <authorList>
            <person name="Himmelreich R."/>
            <person name="Hilbert H."/>
            <person name="Plagens H."/>
            <person name="Pirkl E."/>
            <person name="Li B.-C."/>
            <person name="Herrmann R."/>
        </authorList>
    </citation>
    <scope>NUCLEOTIDE SEQUENCE [LARGE SCALE GENOMIC DNA]</scope>
    <source>
        <strain>ATCC 29342 / M129 / Subtype 1</strain>
    </source>
</reference>
<accession>P75132</accession>
<proteinExistence type="inferred from homology"/>